<gene>
    <name evidence="1" type="primary">argG</name>
    <name type="ordered locus">alr4798</name>
</gene>
<protein>
    <recommendedName>
        <fullName evidence="1">Argininosuccinate synthase</fullName>
        <ecNumber evidence="1">6.3.4.5</ecNumber>
    </recommendedName>
    <alternativeName>
        <fullName evidence="1">Citrulline--aspartate ligase</fullName>
    </alternativeName>
</protein>
<comment type="catalytic activity">
    <reaction evidence="1">
        <text>L-citrulline + L-aspartate + ATP = 2-(N(omega)-L-arginino)succinate + AMP + diphosphate + H(+)</text>
        <dbReference type="Rhea" id="RHEA:10932"/>
        <dbReference type="ChEBI" id="CHEBI:15378"/>
        <dbReference type="ChEBI" id="CHEBI:29991"/>
        <dbReference type="ChEBI" id="CHEBI:30616"/>
        <dbReference type="ChEBI" id="CHEBI:33019"/>
        <dbReference type="ChEBI" id="CHEBI:57472"/>
        <dbReference type="ChEBI" id="CHEBI:57743"/>
        <dbReference type="ChEBI" id="CHEBI:456215"/>
        <dbReference type="EC" id="6.3.4.5"/>
    </reaction>
</comment>
<comment type="pathway">
    <text evidence="1">Amino-acid biosynthesis; L-arginine biosynthesis; L-arginine from L-ornithine and carbamoyl phosphate: step 2/3.</text>
</comment>
<comment type="subunit">
    <text evidence="1">Homotetramer.</text>
</comment>
<comment type="subcellular location">
    <subcellularLocation>
        <location evidence="1">Cytoplasm</location>
    </subcellularLocation>
</comment>
<comment type="similarity">
    <text evidence="1">Belongs to the argininosuccinate synthase family. Type 1 subfamily.</text>
</comment>
<evidence type="ECO:0000255" key="1">
    <source>
        <dbReference type="HAMAP-Rule" id="MF_00005"/>
    </source>
</evidence>
<sequence length="400" mass="43842">MGRAKKVVLAYSGGVDTSVCIPYLKQEWGVEEVITLAADLGQGDELEPIREKALKSGASESLVADVKESFIKDYAFPAIQANALYENRYPLGTALARPLIAKILVEAAAKYGADAIAHGCTGKGNDQVRFDVSCTALNPNLKILAPAREWGMSREATIAYGEKFGIPSPVKKSSPYSIDKNLLGRSIEAGALEDPKFEPPEEIYEMTKAIADTPNEPEYIEIGFTQGLPTTLNGIPKDPVALIQELNQVVGSHGVGRIDMIENRLVGIKSREIYESPAMLVLIPAHRDLESLTLTADVSHYKRGIEETYSQIVYNGLWYSPLKAALDAFIQKTQERVSGTVRVKLFKGNATIVGRWSDSSLYTPDLATYGAEDQFDHKAAEGFIYVWGLPTRIWAQQDRG</sequence>
<feature type="chain" id="PRO_0000148561" description="Argininosuccinate synthase">
    <location>
        <begin position="1"/>
        <end position="400"/>
    </location>
</feature>
<feature type="binding site" evidence="1">
    <location>
        <begin position="10"/>
        <end position="18"/>
    </location>
    <ligand>
        <name>ATP</name>
        <dbReference type="ChEBI" id="CHEBI:30616"/>
    </ligand>
</feature>
<feature type="binding site" evidence="1">
    <location>
        <position position="38"/>
    </location>
    <ligand>
        <name>ATP</name>
        <dbReference type="ChEBI" id="CHEBI:30616"/>
    </ligand>
</feature>
<feature type="binding site" evidence="1">
    <location>
        <position position="89"/>
    </location>
    <ligand>
        <name>L-citrulline</name>
        <dbReference type="ChEBI" id="CHEBI:57743"/>
    </ligand>
</feature>
<feature type="binding site" evidence="1">
    <location>
        <position position="119"/>
    </location>
    <ligand>
        <name>ATP</name>
        <dbReference type="ChEBI" id="CHEBI:30616"/>
    </ligand>
</feature>
<feature type="binding site" evidence="1">
    <location>
        <position position="121"/>
    </location>
    <ligand>
        <name>L-aspartate</name>
        <dbReference type="ChEBI" id="CHEBI:29991"/>
    </ligand>
</feature>
<feature type="binding site" evidence="1">
    <location>
        <position position="125"/>
    </location>
    <ligand>
        <name>L-aspartate</name>
        <dbReference type="ChEBI" id="CHEBI:29991"/>
    </ligand>
</feature>
<feature type="binding site" evidence="1">
    <location>
        <position position="125"/>
    </location>
    <ligand>
        <name>L-citrulline</name>
        <dbReference type="ChEBI" id="CHEBI:57743"/>
    </ligand>
</feature>
<feature type="binding site" evidence="1">
    <location>
        <position position="126"/>
    </location>
    <ligand>
        <name>L-aspartate</name>
        <dbReference type="ChEBI" id="CHEBI:29991"/>
    </ligand>
</feature>
<feature type="binding site" evidence="1">
    <location>
        <position position="129"/>
    </location>
    <ligand>
        <name>L-citrulline</name>
        <dbReference type="ChEBI" id="CHEBI:57743"/>
    </ligand>
</feature>
<feature type="binding site" evidence="1">
    <location>
        <position position="177"/>
    </location>
    <ligand>
        <name>L-citrulline</name>
        <dbReference type="ChEBI" id="CHEBI:57743"/>
    </ligand>
</feature>
<feature type="binding site" evidence="1">
    <location>
        <position position="186"/>
    </location>
    <ligand>
        <name>L-citrulline</name>
        <dbReference type="ChEBI" id="CHEBI:57743"/>
    </ligand>
</feature>
<feature type="binding site" evidence="1">
    <location>
        <position position="262"/>
    </location>
    <ligand>
        <name>L-citrulline</name>
        <dbReference type="ChEBI" id="CHEBI:57743"/>
    </ligand>
</feature>
<feature type="binding site" evidence="1">
    <location>
        <position position="274"/>
    </location>
    <ligand>
        <name>L-citrulline</name>
        <dbReference type="ChEBI" id="CHEBI:57743"/>
    </ligand>
</feature>
<dbReference type="EC" id="6.3.4.5" evidence="1"/>
<dbReference type="EMBL" id="BA000019">
    <property type="protein sequence ID" value="BAB76497.1"/>
    <property type="molecule type" value="Genomic_DNA"/>
</dbReference>
<dbReference type="PIR" id="AF2405">
    <property type="entry name" value="AF2405"/>
</dbReference>
<dbReference type="RefSeq" id="WP_010998928.1">
    <property type="nucleotide sequence ID" value="NZ_RSCN01000035.1"/>
</dbReference>
<dbReference type="SMR" id="Q8YMX6"/>
<dbReference type="STRING" id="103690.gene:10496851"/>
<dbReference type="KEGG" id="ana:alr4798"/>
<dbReference type="eggNOG" id="COG0137">
    <property type="taxonomic scope" value="Bacteria"/>
</dbReference>
<dbReference type="OrthoDB" id="9801641at2"/>
<dbReference type="UniPathway" id="UPA00068">
    <property type="reaction ID" value="UER00113"/>
</dbReference>
<dbReference type="Proteomes" id="UP000002483">
    <property type="component" value="Chromosome"/>
</dbReference>
<dbReference type="GO" id="GO:0005737">
    <property type="term" value="C:cytoplasm"/>
    <property type="evidence" value="ECO:0007669"/>
    <property type="project" value="UniProtKB-SubCell"/>
</dbReference>
<dbReference type="GO" id="GO:0004055">
    <property type="term" value="F:argininosuccinate synthase activity"/>
    <property type="evidence" value="ECO:0007669"/>
    <property type="project" value="UniProtKB-UniRule"/>
</dbReference>
<dbReference type="GO" id="GO:0005524">
    <property type="term" value="F:ATP binding"/>
    <property type="evidence" value="ECO:0007669"/>
    <property type="project" value="UniProtKB-UniRule"/>
</dbReference>
<dbReference type="GO" id="GO:0000053">
    <property type="term" value="P:argininosuccinate metabolic process"/>
    <property type="evidence" value="ECO:0007669"/>
    <property type="project" value="TreeGrafter"/>
</dbReference>
<dbReference type="GO" id="GO:0006526">
    <property type="term" value="P:L-arginine biosynthetic process"/>
    <property type="evidence" value="ECO:0007669"/>
    <property type="project" value="UniProtKB-UniRule"/>
</dbReference>
<dbReference type="GO" id="GO:0000050">
    <property type="term" value="P:urea cycle"/>
    <property type="evidence" value="ECO:0007669"/>
    <property type="project" value="TreeGrafter"/>
</dbReference>
<dbReference type="CDD" id="cd01999">
    <property type="entry name" value="ASS"/>
    <property type="match status" value="1"/>
</dbReference>
<dbReference type="FunFam" id="3.40.50.620:FF:000019">
    <property type="entry name" value="Argininosuccinate synthase"/>
    <property type="match status" value="1"/>
</dbReference>
<dbReference type="FunFam" id="3.90.1260.10:FF:000007">
    <property type="entry name" value="Argininosuccinate synthase"/>
    <property type="match status" value="1"/>
</dbReference>
<dbReference type="Gene3D" id="3.90.1260.10">
    <property type="entry name" value="Argininosuccinate synthetase, chain A, domain 2"/>
    <property type="match status" value="1"/>
</dbReference>
<dbReference type="Gene3D" id="3.40.50.620">
    <property type="entry name" value="HUPs"/>
    <property type="match status" value="1"/>
</dbReference>
<dbReference type="Gene3D" id="1.20.5.470">
    <property type="entry name" value="Single helix bin"/>
    <property type="match status" value="1"/>
</dbReference>
<dbReference type="HAMAP" id="MF_00005">
    <property type="entry name" value="Arg_succ_synth_type1"/>
    <property type="match status" value="1"/>
</dbReference>
<dbReference type="InterPro" id="IPR048268">
    <property type="entry name" value="Arginosuc_syn_C"/>
</dbReference>
<dbReference type="InterPro" id="IPR048267">
    <property type="entry name" value="Arginosuc_syn_N"/>
</dbReference>
<dbReference type="InterPro" id="IPR001518">
    <property type="entry name" value="Arginosuc_synth"/>
</dbReference>
<dbReference type="InterPro" id="IPR018223">
    <property type="entry name" value="Arginosuc_synth_CS"/>
</dbReference>
<dbReference type="InterPro" id="IPR023434">
    <property type="entry name" value="Arginosuc_synth_type_1_subfam"/>
</dbReference>
<dbReference type="InterPro" id="IPR024074">
    <property type="entry name" value="AS_cat/multimer_dom_body"/>
</dbReference>
<dbReference type="InterPro" id="IPR014729">
    <property type="entry name" value="Rossmann-like_a/b/a_fold"/>
</dbReference>
<dbReference type="NCBIfam" id="TIGR00032">
    <property type="entry name" value="argG"/>
    <property type="match status" value="1"/>
</dbReference>
<dbReference type="NCBIfam" id="NF001770">
    <property type="entry name" value="PRK00509.1"/>
    <property type="match status" value="1"/>
</dbReference>
<dbReference type="PANTHER" id="PTHR11587">
    <property type="entry name" value="ARGININOSUCCINATE SYNTHASE"/>
    <property type="match status" value="1"/>
</dbReference>
<dbReference type="PANTHER" id="PTHR11587:SF2">
    <property type="entry name" value="ARGININOSUCCINATE SYNTHASE"/>
    <property type="match status" value="1"/>
</dbReference>
<dbReference type="Pfam" id="PF20979">
    <property type="entry name" value="Arginosuc_syn_C"/>
    <property type="match status" value="1"/>
</dbReference>
<dbReference type="Pfam" id="PF00764">
    <property type="entry name" value="Arginosuc_synth"/>
    <property type="match status" value="1"/>
</dbReference>
<dbReference type="SUPFAM" id="SSF52402">
    <property type="entry name" value="Adenine nucleotide alpha hydrolases-like"/>
    <property type="match status" value="1"/>
</dbReference>
<dbReference type="SUPFAM" id="SSF69864">
    <property type="entry name" value="Argininosuccinate synthetase, C-terminal domain"/>
    <property type="match status" value="1"/>
</dbReference>
<dbReference type="PROSITE" id="PS00564">
    <property type="entry name" value="ARGININOSUCCIN_SYN_1"/>
    <property type="match status" value="1"/>
</dbReference>
<dbReference type="PROSITE" id="PS00565">
    <property type="entry name" value="ARGININOSUCCIN_SYN_2"/>
    <property type="match status" value="1"/>
</dbReference>
<proteinExistence type="inferred from homology"/>
<reference key="1">
    <citation type="journal article" date="2001" name="DNA Res.">
        <title>Complete genomic sequence of the filamentous nitrogen-fixing cyanobacterium Anabaena sp. strain PCC 7120.</title>
        <authorList>
            <person name="Kaneko T."/>
            <person name="Nakamura Y."/>
            <person name="Wolk C.P."/>
            <person name="Kuritz T."/>
            <person name="Sasamoto S."/>
            <person name="Watanabe A."/>
            <person name="Iriguchi M."/>
            <person name="Ishikawa A."/>
            <person name="Kawashima K."/>
            <person name="Kimura T."/>
            <person name="Kishida Y."/>
            <person name="Kohara M."/>
            <person name="Matsumoto M."/>
            <person name="Matsuno A."/>
            <person name="Muraki A."/>
            <person name="Nakazaki N."/>
            <person name="Shimpo S."/>
            <person name="Sugimoto M."/>
            <person name="Takazawa M."/>
            <person name="Yamada M."/>
            <person name="Yasuda M."/>
            <person name="Tabata S."/>
        </authorList>
    </citation>
    <scope>NUCLEOTIDE SEQUENCE [LARGE SCALE GENOMIC DNA]</scope>
    <source>
        <strain>PCC 7120 / SAG 25.82 / UTEX 2576</strain>
    </source>
</reference>
<organism>
    <name type="scientific">Nostoc sp. (strain PCC 7120 / SAG 25.82 / UTEX 2576)</name>
    <dbReference type="NCBI Taxonomy" id="103690"/>
    <lineage>
        <taxon>Bacteria</taxon>
        <taxon>Bacillati</taxon>
        <taxon>Cyanobacteriota</taxon>
        <taxon>Cyanophyceae</taxon>
        <taxon>Nostocales</taxon>
        <taxon>Nostocaceae</taxon>
        <taxon>Nostoc</taxon>
    </lineage>
</organism>
<accession>Q8YMX6</accession>
<name>ASSY_NOSS1</name>
<keyword id="KW-0028">Amino-acid biosynthesis</keyword>
<keyword id="KW-0055">Arginine biosynthesis</keyword>
<keyword id="KW-0067">ATP-binding</keyword>
<keyword id="KW-0963">Cytoplasm</keyword>
<keyword id="KW-0436">Ligase</keyword>
<keyword id="KW-0547">Nucleotide-binding</keyword>
<keyword id="KW-1185">Reference proteome</keyword>